<gene>
    <name evidence="1" type="primary">murA</name>
    <name type="ordered locus">HDEF_1955</name>
</gene>
<organism>
    <name type="scientific">Hamiltonella defensa subsp. Acyrthosiphon pisum (strain 5AT)</name>
    <dbReference type="NCBI Taxonomy" id="572265"/>
    <lineage>
        <taxon>Bacteria</taxon>
        <taxon>Pseudomonadati</taxon>
        <taxon>Pseudomonadota</taxon>
        <taxon>Gammaproteobacteria</taxon>
        <taxon>Enterobacterales</taxon>
        <taxon>Enterobacteriaceae</taxon>
        <taxon>aphid secondary symbionts</taxon>
        <taxon>Candidatus Hamiltonella</taxon>
    </lineage>
</organism>
<name>MURA_HAMD5</name>
<reference key="1">
    <citation type="journal article" date="2009" name="Proc. Natl. Acad. Sci. U.S.A.">
        <title>Hamiltonella defensa, genome evolution of protective bacterial endosymbiont from pathogenic ancestors.</title>
        <authorList>
            <person name="Degnan P.H."/>
            <person name="Yu Y."/>
            <person name="Sisneros N."/>
            <person name="Wing R.A."/>
            <person name="Moran N.A."/>
        </authorList>
    </citation>
    <scope>NUCLEOTIDE SEQUENCE [LARGE SCALE GENOMIC DNA]</scope>
    <source>
        <strain>5AT</strain>
    </source>
</reference>
<feature type="chain" id="PRO_1000202929" description="UDP-N-acetylglucosamine 1-carboxyvinyltransferase">
    <location>
        <begin position="1"/>
        <end position="422"/>
    </location>
</feature>
<feature type="active site" description="Proton donor" evidence="1">
    <location>
        <position position="117"/>
    </location>
</feature>
<feature type="binding site" evidence="1">
    <location>
        <begin position="22"/>
        <end position="23"/>
    </location>
    <ligand>
        <name>phosphoenolpyruvate</name>
        <dbReference type="ChEBI" id="CHEBI:58702"/>
    </ligand>
</feature>
<feature type="binding site" evidence="1">
    <location>
        <position position="93"/>
    </location>
    <ligand>
        <name>UDP-N-acetyl-alpha-D-glucosamine</name>
        <dbReference type="ChEBI" id="CHEBI:57705"/>
    </ligand>
</feature>
<feature type="binding site" evidence="1">
    <location>
        <begin position="122"/>
        <end position="126"/>
    </location>
    <ligand>
        <name>UDP-N-acetyl-alpha-D-glucosamine</name>
        <dbReference type="ChEBI" id="CHEBI:57705"/>
    </ligand>
</feature>
<feature type="binding site" evidence="1">
    <location>
        <begin position="162"/>
        <end position="165"/>
    </location>
    <ligand>
        <name>UDP-N-acetyl-alpha-D-glucosamine</name>
        <dbReference type="ChEBI" id="CHEBI:57705"/>
    </ligand>
</feature>
<feature type="binding site" evidence="1">
    <location>
        <position position="307"/>
    </location>
    <ligand>
        <name>UDP-N-acetyl-alpha-D-glucosamine</name>
        <dbReference type="ChEBI" id="CHEBI:57705"/>
    </ligand>
</feature>
<feature type="binding site" evidence="1">
    <location>
        <position position="329"/>
    </location>
    <ligand>
        <name>UDP-N-acetyl-alpha-D-glucosamine</name>
        <dbReference type="ChEBI" id="CHEBI:57705"/>
    </ligand>
</feature>
<feature type="modified residue" description="2-(S-cysteinyl)pyruvic acid O-phosphothioketal" evidence="1">
    <location>
        <position position="117"/>
    </location>
</feature>
<sequence>MKKFRIQGPCSLSGEVMISGSKNAALPILFSTLLSEEPIELKNIPELKDIDTTLNLLKQLGVKAKYQPPDSIMIDAKAVNHFCAPYELVKTMRASIWALGPLVARFGRGQVSLPGGCAIGARPVDLHIFGLKQLGAKIQIEEGYIKASVEGRLKGAHIVMDKVSVGATLTVMSAATLAEGTSIIENVAREPEIVDTANFLNILGANIQGAGTDKIVVEGVKRLRGGAYSIMPDRIETGTFLVAGAVSRGKVVCRHTQPATLEAVLAKLHEAGAQIEVGKDWISLDMKGKRPKAVNVRTTPYPGFPTDMQAQFTLLNIVATGTGVITETIFENRFMHVPELIRMGAQVKIESNTVICHGVERLSGAGVMATDLRASASLVLAGCIAQGITTVERIYHIDRGYECIENKLRKLGAYIERIQGAQ</sequence>
<accession>C4K7J9</accession>
<protein>
    <recommendedName>
        <fullName evidence="1">UDP-N-acetylglucosamine 1-carboxyvinyltransferase</fullName>
        <ecNumber evidence="1">2.5.1.7</ecNumber>
    </recommendedName>
    <alternativeName>
        <fullName evidence="1">Enoylpyruvate transferase</fullName>
    </alternativeName>
    <alternativeName>
        <fullName evidence="1">UDP-N-acetylglucosamine enolpyruvyl transferase</fullName>
        <shortName evidence="1">EPT</shortName>
    </alternativeName>
</protein>
<evidence type="ECO:0000255" key="1">
    <source>
        <dbReference type="HAMAP-Rule" id="MF_00111"/>
    </source>
</evidence>
<comment type="function">
    <text evidence="1">Cell wall formation. Adds enolpyruvyl to UDP-N-acetylglucosamine.</text>
</comment>
<comment type="catalytic activity">
    <reaction evidence="1">
        <text>phosphoenolpyruvate + UDP-N-acetyl-alpha-D-glucosamine = UDP-N-acetyl-3-O-(1-carboxyvinyl)-alpha-D-glucosamine + phosphate</text>
        <dbReference type="Rhea" id="RHEA:18681"/>
        <dbReference type="ChEBI" id="CHEBI:43474"/>
        <dbReference type="ChEBI" id="CHEBI:57705"/>
        <dbReference type="ChEBI" id="CHEBI:58702"/>
        <dbReference type="ChEBI" id="CHEBI:68483"/>
        <dbReference type="EC" id="2.5.1.7"/>
    </reaction>
</comment>
<comment type="pathway">
    <text evidence="1">Cell wall biogenesis; peptidoglycan biosynthesis.</text>
</comment>
<comment type="subcellular location">
    <subcellularLocation>
        <location evidence="1">Cytoplasm</location>
    </subcellularLocation>
</comment>
<comment type="similarity">
    <text evidence="1">Belongs to the EPSP synthase family. MurA subfamily.</text>
</comment>
<proteinExistence type="inferred from homology"/>
<dbReference type="EC" id="2.5.1.7" evidence="1"/>
<dbReference type="EMBL" id="CP001277">
    <property type="protein sequence ID" value="ACQ68542.1"/>
    <property type="molecule type" value="Genomic_DNA"/>
</dbReference>
<dbReference type="RefSeq" id="WP_015874301.1">
    <property type="nucleotide sequence ID" value="NC_012751.1"/>
</dbReference>
<dbReference type="SMR" id="C4K7J9"/>
<dbReference type="STRING" id="572265.HDEF_1955"/>
<dbReference type="GeneID" id="66261525"/>
<dbReference type="KEGG" id="hde:HDEF_1955"/>
<dbReference type="eggNOG" id="COG0766">
    <property type="taxonomic scope" value="Bacteria"/>
</dbReference>
<dbReference type="HOGENOM" id="CLU_027387_0_0_6"/>
<dbReference type="UniPathway" id="UPA00219"/>
<dbReference type="Proteomes" id="UP000002334">
    <property type="component" value="Chromosome"/>
</dbReference>
<dbReference type="GO" id="GO:0005737">
    <property type="term" value="C:cytoplasm"/>
    <property type="evidence" value="ECO:0007669"/>
    <property type="project" value="UniProtKB-SubCell"/>
</dbReference>
<dbReference type="GO" id="GO:0008760">
    <property type="term" value="F:UDP-N-acetylglucosamine 1-carboxyvinyltransferase activity"/>
    <property type="evidence" value="ECO:0007669"/>
    <property type="project" value="UniProtKB-UniRule"/>
</dbReference>
<dbReference type="GO" id="GO:0051301">
    <property type="term" value="P:cell division"/>
    <property type="evidence" value="ECO:0007669"/>
    <property type="project" value="UniProtKB-KW"/>
</dbReference>
<dbReference type="GO" id="GO:0071555">
    <property type="term" value="P:cell wall organization"/>
    <property type="evidence" value="ECO:0007669"/>
    <property type="project" value="UniProtKB-KW"/>
</dbReference>
<dbReference type="GO" id="GO:0009252">
    <property type="term" value="P:peptidoglycan biosynthetic process"/>
    <property type="evidence" value="ECO:0007669"/>
    <property type="project" value="UniProtKB-UniRule"/>
</dbReference>
<dbReference type="GO" id="GO:0008360">
    <property type="term" value="P:regulation of cell shape"/>
    <property type="evidence" value="ECO:0007669"/>
    <property type="project" value="UniProtKB-KW"/>
</dbReference>
<dbReference type="GO" id="GO:0019277">
    <property type="term" value="P:UDP-N-acetylgalactosamine biosynthetic process"/>
    <property type="evidence" value="ECO:0007669"/>
    <property type="project" value="InterPro"/>
</dbReference>
<dbReference type="CDD" id="cd01555">
    <property type="entry name" value="UdpNAET"/>
    <property type="match status" value="1"/>
</dbReference>
<dbReference type="FunFam" id="3.65.10.10:FF:000002">
    <property type="entry name" value="UDP-N-acetylglucosamine 1-carboxyvinyltransferase"/>
    <property type="match status" value="1"/>
</dbReference>
<dbReference type="Gene3D" id="3.65.10.10">
    <property type="entry name" value="Enolpyruvate transferase domain"/>
    <property type="match status" value="2"/>
</dbReference>
<dbReference type="HAMAP" id="MF_00111">
    <property type="entry name" value="MurA"/>
    <property type="match status" value="1"/>
</dbReference>
<dbReference type="InterPro" id="IPR001986">
    <property type="entry name" value="Enolpyruvate_Tfrase_dom"/>
</dbReference>
<dbReference type="InterPro" id="IPR036968">
    <property type="entry name" value="Enolpyruvate_Tfrase_sf"/>
</dbReference>
<dbReference type="InterPro" id="IPR050068">
    <property type="entry name" value="MurA_subfamily"/>
</dbReference>
<dbReference type="InterPro" id="IPR013792">
    <property type="entry name" value="RNA3'P_cycl/enolpyr_Trfase_a/b"/>
</dbReference>
<dbReference type="InterPro" id="IPR005750">
    <property type="entry name" value="UDP_GlcNAc_COvinyl_MurA"/>
</dbReference>
<dbReference type="NCBIfam" id="TIGR01072">
    <property type="entry name" value="murA"/>
    <property type="match status" value="1"/>
</dbReference>
<dbReference type="NCBIfam" id="NF006873">
    <property type="entry name" value="PRK09369.1"/>
    <property type="match status" value="1"/>
</dbReference>
<dbReference type="PANTHER" id="PTHR43783">
    <property type="entry name" value="UDP-N-ACETYLGLUCOSAMINE 1-CARBOXYVINYLTRANSFERASE"/>
    <property type="match status" value="1"/>
</dbReference>
<dbReference type="PANTHER" id="PTHR43783:SF1">
    <property type="entry name" value="UDP-N-ACETYLGLUCOSAMINE 1-CARBOXYVINYLTRANSFERASE"/>
    <property type="match status" value="1"/>
</dbReference>
<dbReference type="Pfam" id="PF00275">
    <property type="entry name" value="EPSP_synthase"/>
    <property type="match status" value="1"/>
</dbReference>
<dbReference type="SUPFAM" id="SSF55205">
    <property type="entry name" value="EPT/RTPC-like"/>
    <property type="match status" value="1"/>
</dbReference>
<keyword id="KW-0131">Cell cycle</keyword>
<keyword id="KW-0132">Cell division</keyword>
<keyword id="KW-0133">Cell shape</keyword>
<keyword id="KW-0961">Cell wall biogenesis/degradation</keyword>
<keyword id="KW-0963">Cytoplasm</keyword>
<keyword id="KW-0573">Peptidoglycan synthesis</keyword>
<keyword id="KW-0670">Pyruvate</keyword>
<keyword id="KW-0808">Transferase</keyword>